<sequence>MTQALPRVVTIRELLEAGAHFGHPTNRWNPKMKPYIFTARNGIHIIDLQKTVTGLSRAYQFITELTARGEKVLFVGTKKQAQEAVMEEAVRSGQFYINQRWLGGTLTNFATIKRRLKLLSDLEEQRDRGDFARLTKAEAAKLEEKIVRLNRVFAGLKGMDRLPGAVFIIDPRKEELAVREAVKEGIPIVAMVDTNCDPDPIDYVIPCNDDAIRGIRLMAGKIADAAIEGTRRREMSQE</sequence>
<name>RS2_CHLAA</name>
<organism>
    <name type="scientific">Chloroflexus aurantiacus (strain ATCC 29366 / DSM 635 / J-10-fl)</name>
    <dbReference type="NCBI Taxonomy" id="324602"/>
    <lineage>
        <taxon>Bacteria</taxon>
        <taxon>Bacillati</taxon>
        <taxon>Chloroflexota</taxon>
        <taxon>Chloroflexia</taxon>
        <taxon>Chloroflexales</taxon>
        <taxon>Chloroflexineae</taxon>
        <taxon>Chloroflexaceae</taxon>
        <taxon>Chloroflexus</taxon>
    </lineage>
</organism>
<proteinExistence type="inferred from homology"/>
<accession>A9WAF9</accession>
<dbReference type="EMBL" id="CP000909">
    <property type="protein sequence ID" value="ABY36749.1"/>
    <property type="molecule type" value="Genomic_DNA"/>
</dbReference>
<dbReference type="RefSeq" id="WP_012259402.1">
    <property type="nucleotide sequence ID" value="NC_010175.1"/>
</dbReference>
<dbReference type="RefSeq" id="YP_001637138.1">
    <property type="nucleotide sequence ID" value="NC_010175.1"/>
</dbReference>
<dbReference type="SMR" id="A9WAF9"/>
<dbReference type="FunCoup" id="A9WAF9">
    <property type="interactions" value="495"/>
</dbReference>
<dbReference type="STRING" id="324602.Caur_3565"/>
<dbReference type="EnsemblBacteria" id="ABY36749">
    <property type="protein sequence ID" value="ABY36749"/>
    <property type="gene ID" value="Caur_3565"/>
</dbReference>
<dbReference type="KEGG" id="cau:Caur_3565"/>
<dbReference type="PATRIC" id="fig|324602.8.peg.4016"/>
<dbReference type="eggNOG" id="COG0052">
    <property type="taxonomic scope" value="Bacteria"/>
</dbReference>
<dbReference type="HOGENOM" id="CLU_040318_1_2_0"/>
<dbReference type="InParanoid" id="A9WAF9"/>
<dbReference type="Proteomes" id="UP000002008">
    <property type="component" value="Chromosome"/>
</dbReference>
<dbReference type="GO" id="GO:0022627">
    <property type="term" value="C:cytosolic small ribosomal subunit"/>
    <property type="evidence" value="ECO:0000318"/>
    <property type="project" value="GO_Central"/>
</dbReference>
<dbReference type="GO" id="GO:0003735">
    <property type="term" value="F:structural constituent of ribosome"/>
    <property type="evidence" value="ECO:0000318"/>
    <property type="project" value="GO_Central"/>
</dbReference>
<dbReference type="GO" id="GO:0006412">
    <property type="term" value="P:translation"/>
    <property type="evidence" value="ECO:0007669"/>
    <property type="project" value="UniProtKB-UniRule"/>
</dbReference>
<dbReference type="CDD" id="cd01425">
    <property type="entry name" value="RPS2"/>
    <property type="match status" value="1"/>
</dbReference>
<dbReference type="Gene3D" id="3.40.50.10490">
    <property type="entry name" value="Glucose-6-phosphate isomerase like protein, domain 1"/>
    <property type="match status" value="1"/>
</dbReference>
<dbReference type="Gene3D" id="1.10.287.610">
    <property type="entry name" value="Helix hairpin bin"/>
    <property type="match status" value="1"/>
</dbReference>
<dbReference type="HAMAP" id="MF_00291_B">
    <property type="entry name" value="Ribosomal_uS2_B"/>
    <property type="match status" value="1"/>
</dbReference>
<dbReference type="InterPro" id="IPR001865">
    <property type="entry name" value="Ribosomal_uS2"/>
</dbReference>
<dbReference type="InterPro" id="IPR005706">
    <property type="entry name" value="Ribosomal_uS2_bac/mit/plastid"/>
</dbReference>
<dbReference type="InterPro" id="IPR018130">
    <property type="entry name" value="Ribosomal_uS2_CS"/>
</dbReference>
<dbReference type="InterPro" id="IPR023591">
    <property type="entry name" value="Ribosomal_uS2_flav_dom_sf"/>
</dbReference>
<dbReference type="NCBIfam" id="TIGR01011">
    <property type="entry name" value="rpsB_bact"/>
    <property type="match status" value="1"/>
</dbReference>
<dbReference type="PANTHER" id="PTHR12534">
    <property type="entry name" value="30S RIBOSOMAL PROTEIN S2 PROKARYOTIC AND ORGANELLAR"/>
    <property type="match status" value="1"/>
</dbReference>
<dbReference type="PANTHER" id="PTHR12534:SF0">
    <property type="entry name" value="SMALL RIBOSOMAL SUBUNIT PROTEIN US2M"/>
    <property type="match status" value="1"/>
</dbReference>
<dbReference type="Pfam" id="PF00318">
    <property type="entry name" value="Ribosomal_S2"/>
    <property type="match status" value="1"/>
</dbReference>
<dbReference type="PRINTS" id="PR00395">
    <property type="entry name" value="RIBOSOMALS2"/>
</dbReference>
<dbReference type="SUPFAM" id="SSF52313">
    <property type="entry name" value="Ribosomal protein S2"/>
    <property type="match status" value="1"/>
</dbReference>
<dbReference type="PROSITE" id="PS00962">
    <property type="entry name" value="RIBOSOMAL_S2_1"/>
    <property type="match status" value="1"/>
</dbReference>
<dbReference type="PROSITE" id="PS00963">
    <property type="entry name" value="RIBOSOMAL_S2_2"/>
    <property type="match status" value="1"/>
</dbReference>
<comment type="similarity">
    <text evidence="1">Belongs to the universal ribosomal protein uS2 family.</text>
</comment>
<protein>
    <recommendedName>
        <fullName evidence="1">Small ribosomal subunit protein uS2</fullName>
    </recommendedName>
    <alternativeName>
        <fullName evidence="2">30S ribosomal protein S2</fullName>
    </alternativeName>
</protein>
<keyword id="KW-1185">Reference proteome</keyword>
<keyword id="KW-0687">Ribonucleoprotein</keyword>
<keyword id="KW-0689">Ribosomal protein</keyword>
<evidence type="ECO:0000255" key="1">
    <source>
        <dbReference type="HAMAP-Rule" id="MF_00291"/>
    </source>
</evidence>
<evidence type="ECO:0000305" key="2"/>
<gene>
    <name evidence="1" type="primary">rpsB</name>
    <name type="ordered locus">Caur_3565</name>
</gene>
<feature type="chain" id="PRO_0000351987" description="Small ribosomal subunit protein uS2">
    <location>
        <begin position="1"/>
        <end position="238"/>
    </location>
</feature>
<reference key="1">
    <citation type="journal article" date="2011" name="BMC Genomics">
        <title>Complete genome sequence of the filamentous anoxygenic phototrophic bacterium Chloroflexus aurantiacus.</title>
        <authorList>
            <person name="Tang K.H."/>
            <person name="Barry K."/>
            <person name="Chertkov O."/>
            <person name="Dalin E."/>
            <person name="Han C.S."/>
            <person name="Hauser L.J."/>
            <person name="Honchak B.M."/>
            <person name="Karbach L.E."/>
            <person name="Land M.L."/>
            <person name="Lapidus A."/>
            <person name="Larimer F.W."/>
            <person name="Mikhailova N."/>
            <person name="Pitluck S."/>
            <person name="Pierson B.K."/>
            <person name="Blankenship R.E."/>
        </authorList>
    </citation>
    <scope>NUCLEOTIDE SEQUENCE [LARGE SCALE GENOMIC DNA]</scope>
    <source>
        <strain>ATCC 29366 / DSM 635 / J-10-fl</strain>
    </source>
</reference>